<evidence type="ECO:0000255" key="1"/>
<proteinExistence type="predicted"/>
<dbReference type="EMBL" id="U00089">
    <property type="protein sequence ID" value="AAB96099.1"/>
    <property type="molecule type" value="Genomic_DNA"/>
</dbReference>
<dbReference type="PIR" id="S73777">
    <property type="entry name" value="S73777"/>
</dbReference>
<dbReference type="RefSeq" id="NP_110074.1">
    <property type="nucleotide sequence ID" value="NC_000912.1"/>
</dbReference>
<dbReference type="RefSeq" id="WP_010874742.1">
    <property type="nucleotide sequence ID" value="NZ_OU342337.1"/>
</dbReference>
<dbReference type="SMR" id="P75396"/>
<dbReference type="IntAct" id="P75396">
    <property type="interactions" value="1"/>
</dbReference>
<dbReference type="STRING" id="272634.MPN_386"/>
<dbReference type="EnsemblBacteria" id="AAB96099">
    <property type="protein sequence ID" value="AAB96099"/>
    <property type="gene ID" value="MPN_386"/>
</dbReference>
<dbReference type="KEGG" id="mpn:MPN_386"/>
<dbReference type="PATRIC" id="fig|272634.6.peg.417"/>
<dbReference type="HOGENOM" id="CLU_110684_0_0_14"/>
<dbReference type="OrthoDB" id="391791at2"/>
<dbReference type="BioCyc" id="MPNE272634:G1GJ3-613-MONOMER"/>
<dbReference type="Proteomes" id="UP000000808">
    <property type="component" value="Chromosome"/>
</dbReference>
<dbReference type="GO" id="GO:0005737">
    <property type="term" value="C:cytoplasm"/>
    <property type="evidence" value="ECO:0007669"/>
    <property type="project" value="TreeGrafter"/>
</dbReference>
<dbReference type="GO" id="GO:0005524">
    <property type="term" value="F:ATP binding"/>
    <property type="evidence" value="ECO:0007669"/>
    <property type="project" value="UniProtKB-KW"/>
</dbReference>
<dbReference type="GO" id="GO:0019136">
    <property type="term" value="F:deoxynucleoside kinase activity"/>
    <property type="evidence" value="ECO:0007669"/>
    <property type="project" value="InterPro"/>
</dbReference>
<dbReference type="CDD" id="cd01673">
    <property type="entry name" value="dNK"/>
    <property type="match status" value="1"/>
</dbReference>
<dbReference type="Gene3D" id="3.40.50.300">
    <property type="entry name" value="P-loop containing nucleotide triphosphate hydrolases"/>
    <property type="match status" value="1"/>
</dbReference>
<dbReference type="InterPro" id="IPR002624">
    <property type="entry name" value="DCK/DGK"/>
</dbReference>
<dbReference type="InterPro" id="IPR050566">
    <property type="entry name" value="Deoxyribonucleoside_kinase"/>
</dbReference>
<dbReference type="InterPro" id="IPR031314">
    <property type="entry name" value="DNK_dom"/>
</dbReference>
<dbReference type="InterPro" id="IPR027417">
    <property type="entry name" value="P-loop_NTPase"/>
</dbReference>
<dbReference type="PANTHER" id="PTHR10513:SF35">
    <property type="entry name" value="DEOXYADENOSINE KINASE"/>
    <property type="match status" value="1"/>
</dbReference>
<dbReference type="PANTHER" id="PTHR10513">
    <property type="entry name" value="DEOXYNUCLEOSIDE KINASE"/>
    <property type="match status" value="1"/>
</dbReference>
<dbReference type="Pfam" id="PF01712">
    <property type="entry name" value="dNK"/>
    <property type="match status" value="1"/>
</dbReference>
<dbReference type="PIRSF" id="PIRSF000705">
    <property type="entry name" value="DNK"/>
    <property type="match status" value="1"/>
</dbReference>
<dbReference type="SUPFAM" id="SSF52540">
    <property type="entry name" value="P-loop containing nucleoside triphosphate hydrolases"/>
    <property type="match status" value="1"/>
</dbReference>
<name>Y386_MYCPN</name>
<organism>
    <name type="scientific">Mycoplasma pneumoniae (strain ATCC 29342 / M129 / Subtype 1)</name>
    <name type="common">Mycoplasmoides pneumoniae</name>
    <dbReference type="NCBI Taxonomy" id="272634"/>
    <lineage>
        <taxon>Bacteria</taxon>
        <taxon>Bacillati</taxon>
        <taxon>Mycoplasmatota</taxon>
        <taxon>Mycoplasmoidales</taxon>
        <taxon>Mycoplasmoidaceae</taxon>
        <taxon>Mycoplasmoides</taxon>
    </lineage>
</organism>
<feature type="chain" id="PRO_0000210497" description="Uncharacterized protein MG268 homolog">
    <location>
        <begin position="1"/>
        <end position="229"/>
    </location>
</feature>
<feature type="binding site" evidence="1">
    <location>
        <begin position="22"/>
        <end position="29"/>
    </location>
    <ligand>
        <name>ATP</name>
        <dbReference type="ChEBI" id="CHEBI:30616"/>
    </ligand>
</feature>
<gene>
    <name type="ordered locus">MPN_386</name>
    <name type="ORF">F11_orf229</name>
    <name type="ORF">MP451</name>
</gene>
<protein>
    <recommendedName>
        <fullName>Uncharacterized protein MG268 homolog</fullName>
    </recommendedName>
</protein>
<keyword id="KW-0067">ATP-binding</keyword>
<keyword id="KW-0547">Nucleotide-binding</keyword>
<keyword id="KW-1185">Reference proteome</keyword>
<sequence>MKTPLKPKFQPAKIANAVVVGGMIAFGKTTIAESLAKHLKGSKVIYELEEQDQLADLLLAKMYERNDELLYAPLFQLYFTLNRFNKYRKECNNKTPTIFDRSIFEDWLFAKQNIHRPSIFTYYNHLWNGIVKELIFKHGIPALYVILEGDWELFEQRLFQRNRKVEIDNFAKNKDYFKNLYKIYGEFIKNVCYDFGISHCIVNANQSVESITKQVLEVLKSKNLDWEII</sequence>
<accession>P75396</accession>
<reference key="1">
    <citation type="journal article" date="1996" name="Nucleic Acids Res.">
        <title>Complete sequence analysis of the genome of the bacterium Mycoplasma pneumoniae.</title>
        <authorList>
            <person name="Himmelreich R."/>
            <person name="Hilbert H."/>
            <person name="Plagens H."/>
            <person name="Pirkl E."/>
            <person name="Li B.-C."/>
            <person name="Herrmann R."/>
        </authorList>
    </citation>
    <scope>NUCLEOTIDE SEQUENCE [LARGE SCALE GENOMIC DNA]</scope>
    <source>
        <strain>ATCC 29342 / M129 / Subtype 1</strain>
    </source>
</reference>